<comment type="function">
    <text evidence="3">Probable transcription factor (PubMed:26438299). Modulates lifespan and also recovery from the developmentally arrested larval state known as dauer, perhaps acting upstream of phosphatase PTEN/daf-18 (PubMed:26438299). Regulates expression of genes involved in cell division, cell-cycle regulation, and sexual reproduction, including daf-18 (PubMed:26438299).</text>
</comment>
<comment type="subcellular location">
    <subcellularLocation>
        <location evidence="1">Nucleus</location>
    </subcellularLocation>
</comment>
<comment type="developmental stage">
    <text evidence="3">Expressed postembryonically at all larval and adult stages, including the developmentally arrested larval state known as dauer stage (PubMed:26438299). Expressed in neurons of the head and tail, including the motor neurons VD1, DA3, and DA7 (PubMed:26438299). Also expressed in the anal depressor muscle, anterior and posterior intestinal cells, and the head and body wall muscles (PubMed:26438299). Expressed in the PDE sensory neuron pairs and rare, transient expression seen in migrating distal tip cells of larval L3/L4 stages (PubMed:26438299).</text>
</comment>
<comment type="disruption phenotype">
    <text evidence="3">Hermaphrodites produce fewer live progeny at 20 degrees Celsius than wild-type, and also laying more unfertilized oocytes throughout the egg-laying period (PubMed:26438299). Abnormal gonad morphology (PubMed:26438299). Delayed recovery from the developmentally arrested larval state known as dauer (PubMed:26438299). Significantly longer lifespan (PubMed:26438299). Decreased movement (PubMed:26438299). RNAi-mediated knockdown causes an increase in daf-18 transcripts (PubMed:26438299).</text>
</comment>
<evidence type="ECO:0000255" key="1">
    <source>
        <dbReference type="PROSITE-ProRule" id="PRU00981"/>
    </source>
</evidence>
<evidence type="ECO:0000256" key="2">
    <source>
        <dbReference type="SAM" id="MobiDB-lite"/>
    </source>
</evidence>
<evidence type="ECO:0000269" key="3">
    <source>
    </source>
</evidence>
<evidence type="ECO:0000305" key="4"/>
<evidence type="ECO:0000312" key="5">
    <source>
        <dbReference type="Proteomes" id="UP000001940"/>
    </source>
</evidence>
<evidence type="ECO:0000312" key="6">
    <source>
        <dbReference type="WormBase" id="C17C3.7"/>
    </source>
</evidence>
<keyword id="KW-0238">DNA-binding</keyword>
<keyword id="KW-0539">Nucleus</keyword>
<keyword id="KW-1185">Reference proteome</keyword>
<keyword id="KW-0804">Transcription</keyword>
<keyword id="KW-0805">Transcription regulation</keyword>
<organism evidence="5">
    <name type="scientific">Caenorhabditis elegans</name>
    <dbReference type="NCBI Taxonomy" id="6239"/>
    <lineage>
        <taxon>Eukaryota</taxon>
        <taxon>Metazoa</taxon>
        <taxon>Ecdysozoa</taxon>
        <taxon>Nematoda</taxon>
        <taxon>Chromadorea</taxon>
        <taxon>Rhabditida</taxon>
        <taxon>Rhabditina</taxon>
        <taxon>Rhabditomorpha</taxon>
        <taxon>Rhabditoidea</taxon>
        <taxon>Rhabditidae</taxon>
        <taxon>Peloderinae</taxon>
        <taxon>Caenorhabditis</taxon>
    </lineage>
</organism>
<feature type="chain" id="PRO_0000455601" description="Helix-loop-helix protein 25">
    <location>
        <begin position="1"/>
        <end position="268"/>
    </location>
</feature>
<feature type="domain" description="bHLH" evidence="1">
    <location>
        <begin position="92"/>
        <end position="149"/>
    </location>
</feature>
<feature type="region of interest" description="Disordered" evidence="2">
    <location>
        <begin position="1"/>
        <end position="29"/>
    </location>
</feature>
<feature type="region of interest" description="Basic motif" evidence="1">
    <location>
        <begin position="92"/>
        <end position="105"/>
    </location>
</feature>
<feature type="region of interest" description="Helix-loop-helix motif" evidence="1">
    <location>
        <begin position="106"/>
        <end position="149"/>
    </location>
</feature>
<feature type="compositionally biased region" description="Polar residues" evidence="2">
    <location>
        <begin position="1"/>
        <end position="23"/>
    </location>
</feature>
<proteinExistence type="evidence at transcript level"/>
<name>HLH25_CAEEL</name>
<accession>Q18054</accession>
<protein>
    <recommendedName>
        <fullName evidence="6">Helix-loop-helix protein 25</fullName>
    </recommendedName>
</protein>
<reference evidence="5" key="1">
    <citation type="journal article" date="1998" name="Science">
        <title>Genome sequence of the nematode C. elegans: a platform for investigating biology.</title>
        <authorList>
            <consortium name="The C. elegans sequencing consortium"/>
        </authorList>
    </citation>
    <scope>NUCLEOTIDE SEQUENCE [LARGE SCALE GENOMIC DNA]</scope>
    <source>
        <strain evidence="5">Bristol N2</strain>
    </source>
</reference>
<reference evidence="4" key="2">
    <citation type="journal article" date="2015" name="G3 (Bethesda)">
        <title>HES-Mediated Repression of Pten in Caenorhabditis elegans.</title>
        <authorList>
            <person name="Chou H.T."/>
            <person name="Vazquez R.G."/>
            <person name="Wang K."/>
            <person name="Campbell R."/>
            <person name="Milledge G.Z."/>
            <person name="Walthall W.W."/>
            <person name="Johnson C.M."/>
        </authorList>
    </citation>
    <scope>FUNCTION</scope>
    <scope>DEVELOPMENTAL STAGE</scope>
    <scope>DISRUPTION PHENOTYPE</scope>
</reference>
<dbReference type="EMBL" id="BX284602">
    <property type="protein sequence ID" value="CCD64851.1"/>
    <property type="molecule type" value="Genomic_DNA"/>
</dbReference>
<dbReference type="RefSeq" id="NP_495063.2">
    <property type="nucleotide sequence ID" value="NM_062662.3"/>
</dbReference>
<dbReference type="SMR" id="Q18054"/>
<dbReference type="FunCoup" id="Q18054">
    <property type="interactions" value="1067"/>
</dbReference>
<dbReference type="IntAct" id="Q18054">
    <property type="interactions" value="11"/>
</dbReference>
<dbReference type="STRING" id="6239.C17C3.7.1"/>
<dbReference type="PaxDb" id="6239-C17C3.7"/>
<dbReference type="EnsemblMetazoa" id="C17C3.7.1">
    <property type="protein sequence ID" value="C17C3.7.1"/>
    <property type="gene ID" value="WBGene00001964"/>
</dbReference>
<dbReference type="GeneID" id="182717"/>
<dbReference type="KEGG" id="cel:CELE_C17C3.7"/>
<dbReference type="UCSC" id="C17C3.7">
    <property type="organism name" value="c. elegans"/>
</dbReference>
<dbReference type="AGR" id="WB:WBGene00001964"/>
<dbReference type="CTD" id="182717"/>
<dbReference type="WormBase" id="C17C3.7">
    <property type="protein sequence ID" value="CE42919"/>
    <property type="gene ID" value="WBGene00001964"/>
    <property type="gene designation" value="hlh-25"/>
</dbReference>
<dbReference type="eggNOG" id="ENOG502TKHE">
    <property type="taxonomic scope" value="Eukaryota"/>
</dbReference>
<dbReference type="GeneTree" id="ENSGT00970000196840"/>
<dbReference type="HOGENOM" id="CLU_1162055_0_0_1"/>
<dbReference type="InParanoid" id="Q18054"/>
<dbReference type="OrthoDB" id="5909477at2759"/>
<dbReference type="PhylomeDB" id="Q18054"/>
<dbReference type="PRO" id="PR:Q18054"/>
<dbReference type="Proteomes" id="UP000001940">
    <property type="component" value="Chromosome II"/>
</dbReference>
<dbReference type="Bgee" id="WBGene00001964">
    <property type="expression patterns" value="Expressed in embryo and 1 other cell type or tissue"/>
</dbReference>
<dbReference type="GO" id="GO:0005634">
    <property type="term" value="C:nucleus"/>
    <property type="evidence" value="ECO:0000318"/>
    <property type="project" value="GO_Central"/>
</dbReference>
<dbReference type="GO" id="GO:0046983">
    <property type="term" value="F:protein dimerization activity"/>
    <property type="evidence" value="ECO:0007669"/>
    <property type="project" value="InterPro"/>
</dbReference>
<dbReference type="GO" id="GO:0000978">
    <property type="term" value="F:RNA polymerase II cis-regulatory region sequence-specific DNA binding"/>
    <property type="evidence" value="ECO:0000318"/>
    <property type="project" value="GO_Central"/>
</dbReference>
<dbReference type="GO" id="GO:0043054">
    <property type="term" value="P:dauer exit"/>
    <property type="evidence" value="ECO:0000315"/>
    <property type="project" value="UniProtKB"/>
</dbReference>
<dbReference type="GO" id="GO:0008340">
    <property type="term" value="P:determination of adult lifespan"/>
    <property type="evidence" value="ECO:0000315"/>
    <property type="project" value="UniProtKB"/>
</dbReference>
<dbReference type="GO" id="GO:0008585">
    <property type="term" value="P:female gonad development"/>
    <property type="evidence" value="ECO:0000315"/>
    <property type="project" value="UniProtKB"/>
</dbReference>
<dbReference type="GO" id="GO:0000122">
    <property type="term" value="P:negative regulation of transcription by RNA polymerase II"/>
    <property type="evidence" value="ECO:0000315"/>
    <property type="project" value="UniProtKB"/>
</dbReference>
<dbReference type="GO" id="GO:0050767">
    <property type="term" value="P:regulation of neurogenesis"/>
    <property type="evidence" value="ECO:0000318"/>
    <property type="project" value="GO_Central"/>
</dbReference>
<dbReference type="Gene3D" id="4.10.280.10">
    <property type="entry name" value="Helix-loop-helix DNA-binding domain"/>
    <property type="match status" value="1"/>
</dbReference>
<dbReference type="InterPro" id="IPR011598">
    <property type="entry name" value="bHLH_dom"/>
</dbReference>
<dbReference type="InterPro" id="IPR036638">
    <property type="entry name" value="HLH_DNA-bd_sf"/>
</dbReference>
<dbReference type="Pfam" id="PF00010">
    <property type="entry name" value="HLH"/>
    <property type="match status" value="1"/>
</dbReference>
<dbReference type="SMART" id="SM00353">
    <property type="entry name" value="HLH"/>
    <property type="match status" value="1"/>
</dbReference>
<dbReference type="SUPFAM" id="SSF47459">
    <property type="entry name" value="HLH, helix-loop-helix DNA-binding domain"/>
    <property type="match status" value="1"/>
</dbReference>
<dbReference type="PROSITE" id="PS50888">
    <property type="entry name" value="BHLH"/>
    <property type="match status" value="1"/>
</dbReference>
<sequence length="268" mass="31156">MPKVIQSSMSDYRSVPYNQTPKSASERKRRNITNELINECKTIVQKSEEEHISQEVVLFRIVKLVTGVNLESNFSSNDLSESTRRKFDTESERRKVKTEREKIRRKKQDDCYAELKFFILNKQMGSYEQRLKLERITILEIIIDYIKHNSDLLYPETIPQILPLLAGKSTATCENKENEKPKTRMEVKDLFPRLTFQEVQESPTSTSPLLTFPCIPMIPTTQFNVLSNYNTVPSIFSAPLRFILPSLQILTPETSDEEENEETLDIIN</sequence>
<gene>
    <name evidence="6" type="primary">hlh-25</name>
    <name evidence="6" type="ORF">C17C3.7</name>
</gene>